<dbReference type="EMBL" id="AJ009634">
    <property type="protein sequence ID" value="CAA08764.1"/>
    <property type="status" value="ALT_FRAME"/>
    <property type="molecule type" value="Genomic_DNA"/>
</dbReference>
<dbReference type="EMBL" id="AK051097">
    <property type="protein sequence ID" value="BAC34524.1"/>
    <property type="molecule type" value="mRNA"/>
</dbReference>
<dbReference type="EMBL" id="AL691444">
    <property type="status" value="NOT_ANNOTATED_CDS"/>
    <property type="molecule type" value="Genomic_DNA"/>
</dbReference>
<dbReference type="EMBL" id="BC051990">
    <property type="protein sequence ID" value="AAH51990.1"/>
    <property type="molecule type" value="mRNA"/>
</dbReference>
<dbReference type="CCDS" id="CCDS16467.1"/>
<dbReference type="RefSeq" id="NP_034348.2">
    <property type="nucleotide sequence ID" value="NM_010218.2"/>
</dbReference>
<dbReference type="SMR" id="Q8BQB4"/>
<dbReference type="FunCoup" id="Q8BQB4">
    <property type="interactions" value="309"/>
</dbReference>
<dbReference type="STRING" id="10090.ENSMUSP00000097270"/>
<dbReference type="GlyCosmos" id="Q8BQB4">
    <property type="glycosylation" value="2 sites, No reported glycans"/>
</dbReference>
<dbReference type="GlyGen" id="Q8BQB4">
    <property type="glycosylation" value="2 sites"/>
</dbReference>
<dbReference type="PhosphoSitePlus" id="Q8BQB4"/>
<dbReference type="PaxDb" id="10090-ENSMUSP00000097270"/>
<dbReference type="ProteomicsDB" id="266851"/>
<dbReference type="Antibodypedia" id="25981">
    <property type="antibodies" value="86 antibodies from 23 providers"/>
</dbReference>
<dbReference type="DNASU" id="14221"/>
<dbReference type="Ensembl" id="ENSMUST00000099678.5">
    <property type="protein sequence ID" value="ENSMUSP00000097270.4"/>
    <property type="gene ID" value="ENSMUSG00000075012.5"/>
</dbReference>
<dbReference type="GeneID" id="14221"/>
<dbReference type="KEGG" id="mmu:14221"/>
<dbReference type="UCSC" id="uc008lhw.1">
    <property type="organism name" value="mouse"/>
</dbReference>
<dbReference type="AGR" id="MGI:1341907"/>
<dbReference type="CTD" id="24147"/>
<dbReference type="MGI" id="MGI:1341907">
    <property type="gene designation" value="Fjx1"/>
</dbReference>
<dbReference type="VEuPathDB" id="HostDB:ENSMUSG00000075012"/>
<dbReference type="eggNOG" id="ENOG502QUJ4">
    <property type="taxonomic scope" value="Eukaryota"/>
</dbReference>
<dbReference type="GeneTree" id="ENSGT00390000016768"/>
<dbReference type="HOGENOM" id="CLU_033850_0_0_1"/>
<dbReference type="InParanoid" id="Q8BQB4"/>
<dbReference type="OMA" id="WSEWLED"/>
<dbReference type="OrthoDB" id="10055077at2759"/>
<dbReference type="PhylomeDB" id="Q8BQB4"/>
<dbReference type="TreeFam" id="TF324767"/>
<dbReference type="BioGRID-ORCS" id="14221">
    <property type="hits" value="2 hits in 78 CRISPR screens"/>
</dbReference>
<dbReference type="PRO" id="PR:Q8BQB4"/>
<dbReference type="Proteomes" id="UP000000589">
    <property type="component" value="Chromosome 2"/>
</dbReference>
<dbReference type="RNAct" id="Q8BQB4">
    <property type="molecule type" value="protein"/>
</dbReference>
<dbReference type="Bgee" id="ENSMUSG00000075012">
    <property type="expression patterns" value="Expressed in subiculum and 193 other cell types or tissues"/>
</dbReference>
<dbReference type="GO" id="GO:0005615">
    <property type="term" value="C:extracellular space"/>
    <property type="evidence" value="ECO:0000314"/>
    <property type="project" value="MGI"/>
</dbReference>
<dbReference type="GO" id="GO:0010842">
    <property type="term" value="P:retina layer formation"/>
    <property type="evidence" value="ECO:0000316"/>
    <property type="project" value="MGI"/>
</dbReference>
<dbReference type="CDD" id="cd10468">
    <property type="entry name" value="Four-jointed-like_C"/>
    <property type="match status" value="1"/>
</dbReference>
<dbReference type="InterPro" id="IPR024868">
    <property type="entry name" value="FJX1/FJ"/>
</dbReference>
<dbReference type="PANTHER" id="PTHR13147">
    <property type="entry name" value="FOUR-JOINTED BOX PROTEIN 1"/>
    <property type="match status" value="1"/>
</dbReference>
<dbReference type="PANTHER" id="PTHR13147:SF5">
    <property type="entry name" value="FOUR-JOINTED BOX PROTEIN 1"/>
    <property type="match status" value="1"/>
</dbReference>
<dbReference type="PRINTS" id="PR02072">
    <property type="entry name" value="4JOINTEDBOX1"/>
</dbReference>
<comment type="function">
    <text evidence="6">Acts as an inhibitor of dendrite extension and branching.</text>
</comment>
<comment type="subcellular location">
    <subcellularLocation>
        <location evidence="5">Secreted</location>
    </subcellularLocation>
</comment>
<comment type="tissue specificity">
    <text evidence="3 4 5">Expressed in brain, kidney and lung. In the telencephalon, expressed in the piriform cortex, hippocampus and olfactory bulb. In the diencephalon, expressed in the dorsal thalamus. Expressed in Purkinje cells of the cerebellum and in numerous medullary nuclei.</text>
</comment>
<comment type="developmental stage">
    <text evidence="3 4 5">Expressed in embryo at 8.5 dpc onward. In the neural plate, expressed in the presumptive forebrain and midbrain and in rhombomere at 4 and 8.5 dpc. Expressed in the limb buds and in the ectoderm of the first branchial arches at 9.5 dpc. In the brain, expressed in the dorsal mesencephalon (tectum) and prosencephalon (presumptive isocortex) at 9.5, 10.5 and 11.5 dpc. In the cortex, expressed in dorsolateral patch of the neuroepithelium at 10.5 dpc. Expressed in the ectoderm of the branchial arch and the oral ectoderm at 10.5 dpc. In the limbs, expressed in the apical ectodermal ridge at 11.5 dpc. Expressed in the telecephalon, ventricles, diencephalon and medulla oblongata at 12.5 dpc. Expressed in the neural tube, cochlear ganglion and olfactory bulb at 14.5 dpc. In the kidney, lung and intestine, expressed in epithelial cells at 14.5 dpc.</text>
</comment>
<comment type="induction">
    <text evidence="5">Up-regulated by Notch.</text>
</comment>
<comment type="PTM">
    <text evidence="5">Glycosylated.</text>
</comment>
<comment type="PTM">
    <text evidence="5">Undergoes proteolytic cleavage.</text>
</comment>
<comment type="miscellaneous">
    <text>Knockout mice for this gene exhibited an increase in dendrite extension and branching of pyramidal neurons in the CA1 region of the hippocampus.</text>
</comment>
<comment type="similarity">
    <text evidence="7">Belongs to the FJX1/FJ family.</text>
</comment>
<comment type="sequence caution" evidence="7">
    <conflict type="frameshift">
        <sequence resource="EMBL-CDS" id="CAA08764"/>
    </conflict>
</comment>
<sequence>MGRKMRGAAAAAGLWLLALSSLLTLWGGLLPPRTELPASRPPEDRLPPHPIQSGGPAPEPRFPLPPPLVWDARGGSLKTFRALLTLAAGADNPPRRHQDDRGRHEPSGLSWPEERRAVHGGVFWSRGLEEQVPRGFSEAQAAAWLEVARGARVVALDRGGCGRSSNRLARFADGTRACVRYGINPEQIQGEALSYYLARLLGLQRHVPPLALARVEARGAQWVQVQEELRTAHWTEGSVVSLTRWLPNLTDVVVPEPWRSEDGRLRPLRDAGGELTNLSQAELVDLVQWTDLILFDYLTANFDRLVSNLFSLQWDPRVMHRATSNLHRGPGGALVFLDNEAGLVHGYRVAGMWDKYNEPLLQSVCVFRERTARRVLELHRGQDAAARLLRLYSRHEPRFPELAELSEPHAQLLQRRLDFLAKHILHCKAKYGRRPGDLITLRGREGLGYE</sequence>
<gene>
    <name type="primary">Fjx1</name>
</gene>
<evidence type="ECO:0000255" key="1"/>
<evidence type="ECO:0000256" key="2">
    <source>
        <dbReference type="SAM" id="MobiDB-lite"/>
    </source>
</evidence>
<evidence type="ECO:0000269" key="3">
    <source>
    </source>
</evidence>
<evidence type="ECO:0000269" key="4">
    <source>
    </source>
</evidence>
<evidence type="ECO:0000269" key="5">
    <source>
    </source>
</evidence>
<evidence type="ECO:0000269" key="6">
    <source>
    </source>
</evidence>
<evidence type="ECO:0000305" key="7"/>
<organism>
    <name type="scientific">Mus musculus</name>
    <name type="common">Mouse</name>
    <dbReference type="NCBI Taxonomy" id="10090"/>
    <lineage>
        <taxon>Eukaryota</taxon>
        <taxon>Metazoa</taxon>
        <taxon>Chordata</taxon>
        <taxon>Craniata</taxon>
        <taxon>Vertebrata</taxon>
        <taxon>Euteleostomi</taxon>
        <taxon>Mammalia</taxon>
        <taxon>Eutheria</taxon>
        <taxon>Euarchontoglires</taxon>
        <taxon>Glires</taxon>
        <taxon>Rodentia</taxon>
        <taxon>Myomorpha</taxon>
        <taxon>Muroidea</taxon>
        <taxon>Muridae</taxon>
        <taxon>Murinae</taxon>
        <taxon>Mus</taxon>
        <taxon>Mus</taxon>
    </lineage>
</organism>
<feature type="signal peptide" evidence="1">
    <location>
        <begin position="1"/>
        <end position="28"/>
    </location>
</feature>
<feature type="chain" id="PRO_0000333046" description="Four-jointed box protein 1">
    <location>
        <begin position="29"/>
        <end position="450"/>
    </location>
</feature>
<feature type="region of interest" description="Disordered" evidence="2">
    <location>
        <begin position="36"/>
        <end position="61"/>
    </location>
</feature>
<feature type="region of interest" description="Disordered" evidence="2">
    <location>
        <begin position="88"/>
        <end position="111"/>
    </location>
</feature>
<feature type="compositionally biased region" description="Basic and acidic residues" evidence="2">
    <location>
        <begin position="93"/>
        <end position="111"/>
    </location>
</feature>
<feature type="glycosylation site" description="N-linked (GlcNAc...) asparagine" evidence="1">
    <location>
        <position position="248"/>
    </location>
</feature>
<feature type="glycosylation site" description="N-linked (GlcNAc...) asparagine" evidence="1">
    <location>
        <position position="277"/>
    </location>
</feature>
<feature type="sequence conflict" description="In Ref. 1; CAA08764." evidence="7" ref="1">
    <original>L</original>
    <variation>C</variation>
    <location>
        <position position="109"/>
    </location>
</feature>
<reference key="1">
    <citation type="journal article" date="1999" name="Mech. Dev.">
        <title>Fjx1, the murine homologue of the Drosophila four-jointed gene, codes for a putative secreted protein expressed in restricted domains of the developing and adult brain.</title>
        <authorList>
            <person name="Ashery-Padan R."/>
            <person name="Alvarez-Bolado G."/>
            <person name="Klamt B."/>
            <person name="Gessler M."/>
            <person name="Gruss P."/>
        </authorList>
    </citation>
    <scope>NUCLEOTIDE SEQUENCE [GENOMIC DNA]</scope>
    <scope>TISSUE SPECIFICITY</scope>
    <scope>DEVELOPMENTAL STAGE</scope>
    <source>
        <strain>129/SvJ</strain>
    </source>
</reference>
<reference key="2">
    <citation type="journal article" date="2005" name="Science">
        <title>The transcriptional landscape of the mammalian genome.</title>
        <authorList>
            <person name="Carninci P."/>
            <person name="Kasukawa T."/>
            <person name="Katayama S."/>
            <person name="Gough J."/>
            <person name="Frith M.C."/>
            <person name="Maeda N."/>
            <person name="Oyama R."/>
            <person name="Ravasi T."/>
            <person name="Lenhard B."/>
            <person name="Wells C."/>
            <person name="Kodzius R."/>
            <person name="Shimokawa K."/>
            <person name="Bajic V.B."/>
            <person name="Brenner S.E."/>
            <person name="Batalov S."/>
            <person name="Forrest A.R."/>
            <person name="Zavolan M."/>
            <person name="Davis M.J."/>
            <person name="Wilming L.G."/>
            <person name="Aidinis V."/>
            <person name="Allen J.E."/>
            <person name="Ambesi-Impiombato A."/>
            <person name="Apweiler R."/>
            <person name="Aturaliya R.N."/>
            <person name="Bailey T.L."/>
            <person name="Bansal M."/>
            <person name="Baxter L."/>
            <person name="Beisel K.W."/>
            <person name="Bersano T."/>
            <person name="Bono H."/>
            <person name="Chalk A.M."/>
            <person name="Chiu K.P."/>
            <person name="Choudhary V."/>
            <person name="Christoffels A."/>
            <person name="Clutterbuck D.R."/>
            <person name="Crowe M.L."/>
            <person name="Dalla E."/>
            <person name="Dalrymple B.P."/>
            <person name="de Bono B."/>
            <person name="Della Gatta G."/>
            <person name="di Bernardo D."/>
            <person name="Down T."/>
            <person name="Engstrom P."/>
            <person name="Fagiolini M."/>
            <person name="Faulkner G."/>
            <person name="Fletcher C.F."/>
            <person name="Fukushima T."/>
            <person name="Furuno M."/>
            <person name="Futaki S."/>
            <person name="Gariboldi M."/>
            <person name="Georgii-Hemming P."/>
            <person name="Gingeras T.R."/>
            <person name="Gojobori T."/>
            <person name="Green R.E."/>
            <person name="Gustincich S."/>
            <person name="Harbers M."/>
            <person name="Hayashi Y."/>
            <person name="Hensch T.K."/>
            <person name="Hirokawa N."/>
            <person name="Hill D."/>
            <person name="Huminiecki L."/>
            <person name="Iacono M."/>
            <person name="Ikeo K."/>
            <person name="Iwama A."/>
            <person name="Ishikawa T."/>
            <person name="Jakt M."/>
            <person name="Kanapin A."/>
            <person name="Katoh M."/>
            <person name="Kawasawa Y."/>
            <person name="Kelso J."/>
            <person name="Kitamura H."/>
            <person name="Kitano H."/>
            <person name="Kollias G."/>
            <person name="Krishnan S.P."/>
            <person name="Kruger A."/>
            <person name="Kummerfeld S.K."/>
            <person name="Kurochkin I.V."/>
            <person name="Lareau L.F."/>
            <person name="Lazarevic D."/>
            <person name="Lipovich L."/>
            <person name="Liu J."/>
            <person name="Liuni S."/>
            <person name="McWilliam S."/>
            <person name="Madan Babu M."/>
            <person name="Madera M."/>
            <person name="Marchionni L."/>
            <person name="Matsuda H."/>
            <person name="Matsuzawa S."/>
            <person name="Miki H."/>
            <person name="Mignone F."/>
            <person name="Miyake S."/>
            <person name="Morris K."/>
            <person name="Mottagui-Tabar S."/>
            <person name="Mulder N."/>
            <person name="Nakano N."/>
            <person name="Nakauchi H."/>
            <person name="Ng P."/>
            <person name="Nilsson R."/>
            <person name="Nishiguchi S."/>
            <person name="Nishikawa S."/>
            <person name="Nori F."/>
            <person name="Ohara O."/>
            <person name="Okazaki Y."/>
            <person name="Orlando V."/>
            <person name="Pang K.C."/>
            <person name="Pavan W.J."/>
            <person name="Pavesi G."/>
            <person name="Pesole G."/>
            <person name="Petrovsky N."/>
            <person name="Piazza S."/>
            <person name="Reed J."/>
            <person name="Reid J.F."/>
            <person name="Ring B.Z."/>
            <person name="Ringwald M."/>
            <person name="Rost B."/>
            <person name="Ruan Y."/>
            <person name="Salzberg S.L."/>
            <person name="Sandelin A."/>
            <person name="Schneider C."/>
            <person name="Schoenbach C."/>
            <person name="Sekiguchi K."/>
            <person name="Semple C.A."/>
            <person name="Seno S."/>
            <person name="Sessa L."/>
            <person name="Sheng Y."/>
            <person name="Shibata Y."/>
            <person name="Shimada H."/>
            <person name="Shimada K."/>
            <person name="Silva D."/>
            <person name="Sinclair B."/>
            <person name="Sperling S."/>
            <person name="Stupka E."/>
            <person name="Sugiura K."/>
            <person name="Sultana R."/>
            <person name="Takenaka Y."/>
            <person name="Taki K."/>
            <person name="Tammoja K."/>
            <person name="Tan S.L."/>
            <person name="Tang S."/>
            <person name="Taylor M.S."/>
            <person name="Tegner J."/>
            <person name="Teichmann S.A."/>
            <person name="Ueda H.R."/>
            <person name="van Nimwegen E."/>
            <person name="Verardo R."/>
            <person name="Wei C.L."/>
            <person name="Yagi K."/>
            <person name="Yamanishi H."/>
            <person name="Zabarovsky E."/>
            <person name="Zhu S."/>
            <person name="Zimmer A."/>
            <person name="Hide W."/>
            <person name="Bult C."/>
            <person name="Grimmond S.M."/>
            <person name="Teasdale R.D."/>
            <person name="Liu E.T."/>
            <person name="Brusic V."/>
            <person name="Quackenbush J."/>
            <person name="Wahlestedt C."/>
            <person name="Mattick J.S."/>
            <person name="Hume D.A."/>
            <person name="Kai C."/>
            <person name="Sasaki D."/>
            <person name="Tomaru Y."/>
            <person name="Fukuda S."/>
            <person name="Kanamori-Katayama M."/>
            <person name="Suzuki M."/>
            <person name="Aoki J."/>
            <person name="Arakawa T."/>
            <person name="Iida J."/>
            <person name="Imamura K."/>
            <person name="Itoh M."/>
            <person name="Kato T."/>
            <person name="Kawaji H."/>
            <person name="Kawagashira N."/>
            <person name="Kawashima T."/>
            <person name="Kojima M."/>
            <person name="Kondo S."/>
            <person name="Konno H."/>
            <person name="Nakano K."/>
            <person name="Ninomiya N."/>
            <person name="Nishio T."/>
            <person name="Okada M."/>
            <person name="Plessy C."/>
            <person name="Shibata K."/>
            <person name="Shiraki T."/>
            <person name="Suzuki S."/>
            <person name="Tagami M."/>
            <person name="Waki K."/>
            <person name="Watahiki A."/>
            <person name="Okamura-Oho Y."/>
            <person name="Suzuki H."/>
            <person name="Kawai J."/>
            <person name="Hayashizaki Y."/>
        </authorList>
    </citation>
    <scope>NUCLEOTIDE SEQUENCE [LARGE SCALE MRNA]</scope>
    <source>
        <strain>C57BL/6J</strain>
        <tissue>Embryo</tissue>
    </source>
</reference>
<reference key="3">
    <citation type="journal article" date="2009" name="PLoS Biol.">
        <title>Lineage-specific biology revealed by a finished genome assembly of the mouse.</title>
        <authorList>
            <person name="Church D.M."/>
            <person name="Goodstadt L."/>
            <person name="Hillier L.W."/>
            <person name="Zody M.C."/>
            <person name="Goldstein S."/>
            <person name="She X."/>
            <person name="Bult C.J."/>
            <person name="Agarwala R."/>
            <person name="Cherry J.L."/>
            <person name="DiCuccio M."/>
            <person name="Hlavina W."/>
            <person name="Kapustin Y."/>
            <person name="Meric P."/>
            <person name="Maglott D."/>
            <person name="Birtle Z."/>
            <person name="Marques A.C."/>
            <person name="Graves T."/>
            <person name="Zhou S."/>
            <person name="Teague B."/>
            <person name="Potamousis K."/>
            <person name="Churas C."/>
            <person name="Place M."/>
            <person name="Herschleb J."/>
            <person name="Runnheim R."/>
            <person name="Forrest D."/>
            <person name="Amos-Landgraf J."/>
            <person name="Schwartz D.C."/>
            <person name="Cheng Z."/>
            <person name="Lindblad-Toh K."/>
            <person name="Eichler E.E."/>
            <person name="Ponting C.P."/>
        </authorList>
    </citation>
    <scope>NUCLEOTIDE SEQUENCE [LARGE SCALE GENOMIC DNA]</scope>
    <source>
        <strain>C57BL/6J</strain>
    </source>
</reference>
<reference key="4">
    <citation type="journal article" date="2004" name="Genome Res.">
        <title>The status, quality, and expansion of the NIH full-length cDNA project: the Mammalian Gene Collection (MGC).</title>
        <authorList>
            <consortium name="The MGC Project Team"/>
        </authorList>
    </citation>
    <scope>NUCLEOTIDE SEQUENCE [LARGE SCALE MRNA]</scope>
    <source>
        <strain>C57BL/6J</strain>
        <tissue>Brain</tissue>
    </source>
</reference>
<reference key="5">
    <citation type="journal article" date="2005" name="Dev. Dyn.">
        <title>Fjx1: a notch-inducible secreted ligand with specific binding sites in developing mouse embryos and adult brain.</title>
        <authorList>
            <person name="Rock R."/>
            <person name="Heinrich A.C."/>
            <person name="Schumacher N."/>
            <person name="Gessler M."/>
        </authorList>
    </citation>
    <scope>INDUCTION</scope>
    <scope>PROTEOLYTIC CLEAVAGE</scope>
    <scope>GLYCOSYLATION</scope>
    <scope>SUBCELLULAR LOCATION</scope>
    <scope>DEVELOPMENTAL STAGE</scope>
    <scope>TISSUE SPECIFICITY</scope>
</reference>
<reference key="6">
    <citation type="journal article" date="2005" name="Dev. Dyn.">
        <title>Expression of mouse dchs1, fjx1, and fat-j suggests conservation of the planar cell polarity pathway identified in Drosophila.</title>
        <authorList>
            <person name="Rock R."/>
            <person name="Schrauth S."/>
            <person name="Gessler M."/>
        </authorList>
    </citation>
    <scope>TISSUE SPECIFICITY</scope>
    <scope>DEVELOPMENTAL STAGE</scope>
</reference>
<reference key="7">
    <citation type="journal article" date="2007" name="Dev. Biol.">
        <title>The rodent four-jointed ortholog Fjx1 regulates dendrite extension.</title>
        <authorList>
            <person name="Probst B."/>
            <person name="Rock R."/>
            <person name="Gessler M."/>
            <person name="Vortkamp A."/>
            <person name="Pueschel A.W."/>
        </authorList>
    </citation>
    <scope>FUNCTION</scope>
</reference>
<accession>Q8BQB4</accession>
<accession>Q9Z1M1</accession>
<protein>
    <recommendedName>
        <fullName>Four-jointed box protein 1</fullName>
        <shortName>Four-jointed protein x1</shortName>
    </recommendedName>
    <alternativeName>
        <fullName>Four-jointed protein homolog</fullName>
    </alternativeName>
</protein>
<proteinExistence type="evidence at protein level"/>
<name>FJX1_MOUSE</name>
<keyword id="KW-0325">Glycoprotein</keyword>
<keyword id="KW-1185">Reference proteome</keyword>
<keyword id="KW-0964">Secreted</keyword>
<keyword id="KW-0732">Signal</keyword>